<dbReference type="EC" id="3.1.1.-"/>
<dbReference type="EMBL" id="AL162506">
    <property type="protein sequence ID" value="CAB82926.1"/>
    <property type="molecule type" value="Genomic_DNA"/>
</dbReference>
<dbReference type="EMBL" id="CP002688">
    <property type="protein sequence ID" value="AED90633.1"/>
    <property type="molecule type" value="Genomic_DNA"/>
</dbReference>
<dbReference type="EMBL" id="AF360329">
    <property type="protein sequence ID" value="AAK26039.1"/>
    <property type="molecule type" value="mRNA"/>
</dbReference>
<dbReference type="EMBL" id="AY085113">
    <property type="protein sequence ID" value="AAM61667.1"/>
    <property type="molecule type" value="mRNA"/>
</dbReference>
<dbReference type="PIR" id="T48388">
    <property type="entry name" value="T48388"/>
</dbReference>
<dbReference type="RefSeq" id="NP_195981.1">
    <property type="nucleotide sequence ID" value="NM_120442.4"/>
</dbReference>
<dbReference type="SMR" id="Q9LZS7"/>
<dbReference type="FunCoup" id="Q9LZS7">
    <property type="interactions" value="844"/>
</dbReference>
<dbReference type="IntAct" id="Q9LZS7">
    <property type="interactions" value="1"/>
</dbReference>
<dbReference type="STRING" id="3702.Q9LZS7"/>
<dbReference type="GlyGen" id="Q9LZS7">
    <property type="glycosylation" value="3 sites"/>
</dbReference>
<dbReference type="PaxDb" id="3702-AT5G03610.1"/>
<dbReference type="ProteomicsDB" id="221987"/>
<dbReference type="EnsemblPlants" id="AT5G03610.1">
    <property type="protein sequence ID" value="AT5G03610.1"/>
    <property type="gene ID" value="AT5G03610"/>
</dbReference>
<dbReference type="GeneID" id="831778"/>
<dbReference type="Gramene" id="AT5G03610.1">
    <property type="protein sequence ID" value="AT5G03610.1"/>
    <property type="gene ID" value="AT5G03610"/>
</dbReference>
<dbReference type="KEGG" id="ath:AT5G03610"/>
<dbReference type="Araport" id="AT5G03610"/>
<dbReference type="TAIR" id="AT5G03610"/>
<dbReference type="eggNOG" id="ENOG502QU3Y">
    <property type="taxonomic scope" value="Eukaryota"/>
</dbReference>
<dbReference type="HOGENOM" id="CLU_015101_12_0_1"/>
<dbReference type="InParanoid" id="Q9LZS7"/>
<dbReference type="OMA" id="IVCDNPK"/>
<dbReference type="OrthoDB" id="1600564at2759"/>
<dbReference type="PhylomeDB" id="Q9LZS7"/>
<dbReference type="BioCyc" id="ARA:AT5G03610-MONOMER"/>
<dbReference type="PRO" id="PR:Q9LZS7"/>
<dbReference type="Proteomes" id="UP000006548">
    <property type="component" value="Chromosome 5"/>
</dbReference>
<dbReference type="ExpressionAtlas" id="Q9LZS7">
    <property type="expression patterns" value="baseline and differential"/>
</dbReference>
<dbReference type="GO" id="GO:0005576">
    <property type="term" value="C:extracellular region"/>
    <property type="evidence" value="ECO:0007669"/>
    <property type="project" value="UniProtKB-SubCell"/>
</dbReference>
<dbReference type="GO" id="GO:0016788">
    <property type="term" value="F:hydrolase activity, acting on ester bonds"/>
    <property type="evidence" value="ECO:0007669"/>
    <property type="project" value="InterPro"/>
</dbReference>
<dbReference type="GO" id="GO:0016042">
    <property type="term" value="P:lipid catabolic process"/>
    <property type="evidence" value="ECO:0007669"/>
    <property type="project" value="UniProtKB-KW"/>
</dbReference>
<dbReference type="CDD" id="cd01837">
    <property type="entry name" value="SGNH_plant_lipase_like"/>
    <property type="match status" value="1"/>
</dbReference>
<dbReference type="Gene3D" id="3.40.50.1110">
    <property type="entry name" value="SGNH hydrolase"/>
    <property type="match status" value="1"/>
</dbReference>
<dbReference type="InterPro" id="IPR001087">
    <property type="entry name" value="GDSL"/>
</dbReference>
<dbReference type="InterPro" id="IPR036514">
    <property type="entry name" value="SGNH_hydro_sf"/>
</dbReference>
<dbReference type="InterPro" id="IPR035669">
    <property type="entry name" value="SGNH_plant_lipase-like"/>
</dbReference>
<dbReference type="PANTHER" id="PTHR46020:SF32">
    <property type="entry name" value="GDSL ESTERASE_LIPASE"/>
    <property type="match status" value="1"/>
</dbReference>
<dbReference type="PANTHER" id="PTHR46020">
    <property type="entry name" value="OSJNBB0059K02.9 PROTEIN"/>
    <property type="match status" value="1"/>
</dbReference>
<dbReference type="Pfam" id="PF00657">
    <property type="entry name" value="Lipase_GDSL"/>
    <property type="match status" value="1"/>
</dbReference>
<dbReference type="SUPFAM" id="SSF52266">
    <property type="entry name" value="SGNH hydrolase"/>
    <property type="match status" value="1"/>
</dbReference>
<organism>
    <name type="scientific">Arabidopsis thaliana</name>
    <name type="common">Mouse-ear cress</name>
    <dbReference type="NCBI Taxonomy" id="3702"/>
    <lineage>
        <taxon>Eukaryota</taxon>
        <taxon>Viridiplantae</taxon>
        <taxon>Streptophyta</taxon>
        <taxon>Embryophyta</taxon>
        <taxon>Tracheophyta</taxon>
        <taxon>Spermatophyta</taxon>
        <taxon>Magnoliopsida</taxon>
        <taxon>eudicotyledons</taxon>
        <taxon>Gunneridae</taxon>
        <taxon>Pentapetalae</taxon>
        <taxon>rosids</taxon>
        <taxon>malvids</taxon>
        <taxon>Brassicales</taxon>
        <taxon>Brassicaceae</taxon>
        <taxon>Camelineae</taxon>
        <taxon>Arabidopsis</taxon>
    </lineage>
</organism>
<reference key="1">
    <citation type="journal article" date="2000" name="Nature">
        <title>Sequence and analysis of chromosome 5 of the plant Arabidopsis thaliana.</title>
        <authorList>
            <person name="Tabata S."/>
            <person name="Kaneko T."/>
            <person name="Nakamura Y."/>
            <person name="Kotani H."/>
            <person name="Kato T."/>
            <person name="Asamizu E."/>
            <person name="Miyajima N."/>
            <person name="Sasamoto S."/>
            <person name="Kimura T."/>
            <person name="Hosouchi T."/>
            <person name="Kawashima K."/>
            <person name="Kohara M."/>
            <person name="Matsumoto M."/>
            <person name="Matsuno A."/>
            <person name="Muraki A."/>
            <person name="Nakayama S."/>
            <person name="Nakazaki N."/>
            <person name="Naruo K."/>
            <person name="Okumura S."/>
            <person name="Shinpo S."/>
            <person name="Takeuchi C."/>
            <person name="Wada T."/>
            <person name="Watanabe A."/>
            <person name="Yamada M."/>
            <person name="Yasuda M."/>
            <person name="Sato S."/>
            <person name="de la Bastide M."/>
            <person name="Huang E."/>
            <person name="Spiegel L."/>
            <person name="Gnoj L."/>
            <person name="O'Shaughnessy A."/>
            <person name="Preston R."/>
            <person name="Habermann K."/>
            <person name="Murray J."/>
            <person name="Johnson D."/>
            <person name="Rohlfing T."/>
            <person name="Nelson J."/>
            <person name="Stoneking T."/>
            <person name="Pepin K."/>
            <person name="Spieth J."/>
            <person name="Sekhon M."/>
            <person name="Armstrong J."/>
            <person name="Becker M."/>
            <person name="Belter E."/>
            <person name="Cordum H."/>
            <person name="Cordes M."/>
            <person name="Courtney L."/>
            <person name="Courtney W."/>
            <person name="Dante M."/>
            <person name="Du H."/>
            <person name="Edwards J."/>
            <person name="Fryman J."/>
            <person name="Haakensen B."/>
            <person name="Lamar E."/>
            <person name="Latreille P."/>
            <person name="Leonard S."/>
            <person name="Meyer R."/>
            <person name="Mulvaney E."/>
            <person name="Ozersky P."/>
            <person name="Riley A."/>
            <person name="Strowmatt C."/>
            <person name="Wagner-McPherson C."/>
            <person name="Wollam A."/>
            <person name="Yoakum M."/>
            <person name="Bell M."/>
            <person name="Dedhia N."/>
            <person name="Parnell L."/>
            <person name="Shah R."/>
            <person name="Rodriguez M."/>
            <person name="Hoon See L."/>
            <person name="Vil D."/>
            <person name="Baker J."/>
            <person name="Kirchoff K."/>
            <person name="Toth K."/>
            <person name="King L."/>
            <person name="Bahret A."/>
            <person name="Miller B."/>
            <person name="Marra M.A."/>
            <person name="Martienssen R."/>
            <person name="McCombie W.R."/>
            <person name="Wilson R.K."/>
            <person name="Murphy G."/>
            <person name="Bancroft I."/>
            <person name="Volckaert G."/>
            <person name="Wambutt R."/>
            <person name="Duesterhoeft A."/>
            <person name="Stiekema W."/>
            <person name="Pohl T."/>
            <person name="Entian K.-D."/>
            <person name="Terryn N."/>
            <person name="Hartley N."/>
            <person name="Bent E."/>
            <person name="Johnson S."/>
            <person name="Langham S.-A."/>
            <person name="McCullagh B."/>
            <person name="Robben J."/>
            <person name="Grymonprez B."/>
            <person name="Zimmermann W."/>
            <person name="Ramsperger U."/>
            <person name="Wedler H."/>
            <person name="Balke K."/>
            <person name="Wedler E."/>
            <person name="Peters S."/>
            <person name="van Staveren M."/>
            <person name="Dirkse W."/>
            <person name="Mooijman P."/>
            <person name="Klein Lankhorst R."/>
            <person name="Weitzenegger T."/>
            <person name="Bothe G."/>
            <person name="Rose M."/>
            <person name="Hauf J."/>
            <person name="Berneiser S."/>
            <person name="Hempel S."/>
            <person name="Feldpausch M."/>
            <person name="Lamberth S."/>
            <person name="Villarroel R."/>
            <person name="Gielen J."/>
            <person name="Ardiles W."/>
            <person name="Bents O."/>
            <person name="Lemcke K."/>
            <person name="Kolesov G."/>
            <person name="Mayer K.F.X."/>
            <person name="Rudd S."/>
            <person name="Schoof H."/>
            <person name="Schueller C."/>
            <person name="Zaccaria P."/>
            <person name="Mewes H.-W."/>
            <person name="Bevan M."/>
            <person name="Fransz P.F."/>
        </authorList>
    </citation>
    <scope>NUCLEOTIDE SEQUENCE [LARGE SCALE GENOMIC DNA]</scope>
    <source>
        <strain>cv. Columbia</strain>
    </source>
</reference>
<reference key="2">
    <citation type="journal article" date="2017" name="Plant J.">
        <title>Araport11: a complete reannotation of the Arabidopsis thaliana reference genome.</title>
        <authorList>
            <person name="Cheng C.Y."/>
            <person name="Krishnakumar V."/>
            <person name="Chan A.P."/>
            <person name="Thibaud-Nissen F."/>
            <person name="Schobel S."/>
            <person name="Town C.D."/>
        </authorList>
    </citation>
    <scope>GENOME REANNOTATION</scope>
    <source>
        <strain>cv. Columbia</strain>
    </source>
</reference>
<reference key="3">
    <citation type="journal article" date="2003" name="Science">
        <title>Empirical analysis of transcriptional activity in the Arabidopsis genome.</title>
        <authorList>
            <person name="Yamada K."/>
            <person name="Lim J."/>
            <person name="Dale J.M."/>
            <person name="Chen H."/>
            <person name="Shinn P."/>
            <person name="Palm C.J."/>
            <person name="Southwick A.M."/>
            <person name="Wu H.C."/>
            <person name="Kim C.J."/>
            <person name="Nguyen M."/>
            <person name="Pham P.K."/>
            <person name="Cheuk R.F."/>
            <person name="Karlin-Newmann G."/>
            <person name="Liu S.X."/>
            <person name="Lam B."/>
            <person name="Sakano H."/>
            <person name="Wu T."/>
            <person name="Yu G."/>
            <person name="Miranda M."/>
            <person name="Quach H.L."/>
            <person name="Tripp M."/>
            <person name="Chang C.H."/>
            <person name="Lee J.M."/>
            <person name="Toriumi M.J."/>
            <person name="Chan M.M."/>
            <person name="Tang C.C."/>
            <person name="Onodera C.S."/>
            <person name="Deng J.M."/>
            <person name="Akiyama K."/>
            <person name="Ansari Y."/>
            <person name="Arakawa T."/>
            <person name="Banh J."/>
            <person name="Banno F."/>
            <person name="Bowser L."/>
            <person name="Brooks S.Y."/>
            <person name="Carninci P."/>
            <person name="Chao Q."/>
            <person name="Choy N."/>
            <person name="Enju A."/>
            <person name="Goldsmith A.D."/>
            <person name="Gurjal M."/>
            <person name="Hansen N.F."/>
            <person name="Hayashizaki Y."/>
            <person name="Johnson-Hopson C."/>
            <person name="Hsuan V.W."/>
            <person name="Iida K."/>
            <person name="Karnes M."/>
            <person name="Khan S."/>
            <person name="Koesema E."/>
            <person name="Ishida J."/>
            <person name="Jiang P.X."/>
            <person name="Jones T."/>
            <person name="Kawai J."/>
            <person name="Kamiya A."/>
            <person name="Meyers C."/>
            <person name="Nakajima M."/>
            <person name="Narusaka M."/>
            <person name="Seki M."/>
            <person name="Sakurai T."/>
            <person name="Satou M."/>
            <person name="Tamse R."/>
            <person name="Vaysberg M."/>
            <person name="Wallender E.K."/>
            <person name="Wong C."/>
            <person name="Yamamura Y."/>
            <person name="Yuan S."/>
            <person name="Shinozaki K."/>
            <person name="Davis R.W."/>
            <person name="Theologis A."/>
            <person name="Ecker J.R."/>
        </authorList>
    </citation>
    <scope>NUCLEOTIDE SEQUENCE [LARGE SCALE MRNA]</scope>
    <source>
        <strain>cv. Columbia</strain>
    </source>
</reference>
<reference key="4">
    <citation type="submission" date="2002-03" db="EMBL/GenBank/DDBJ databases">
        <title>Full-length cDNA from Arabidopsis thaliana.</title>
        <authorList>
            <person name="Brover V.V."/>
            <person name="Troukhan M.E."/>
            <person name="Alexandrov N.A."/>
            <person name="Lu Y.-P."/>
            <person name="Flavell R.B."/>
            <person name="Feldmann K.A."/>
        </authorList>
    </citation>
    <scope>NUCLEOTIDE SEQUENCE [LARGE SCALE MRNA]</scope>
</reference>
<reference key="5">
    <citation type="journal article" date="2004" name="Prog. Lipid Res.">
        <title>GDSL family of serine esterases/lipases.</title>
        <authorList>
            <person name="Akoh C.C."/>
            <person name="Lee G.-C."/>
            <person name="Liaw Y.-C."/>
            <person name="Huang T.-H."/>
            <person name="Shaw J.-F."/>
        </authorList>
    </citation>
    <scope>REVIEW</scope>
</reference>
<reference key="6">
    <citation type="journal article" date="2008" name="Pak. J. Biol. Sci.">
        <title>Sequence analysis of GDSL lipase gene family in Arabidopsis thaliana.</title>
        <authorList>
            <person name="Ling H."/>
        </authorList>
    </citation>
    <scope>GENE FAMILY</scope>
</reference>
<name>GDL71_ARATH</name>
<comment type="subcellular location">
    <subcellularLocation>
        <location evidence="3">Secreted</location>
    </subcellularLocation>
</comment>
<comment type="similarity">
    <text evidence="3">Belongs to the 'GDSL' lipolytic enzyme family.</text>
</comment>
<proteinExistence type="evidence at transcript level"/>
<feature type="signal peptide" evidence="2">
    <location>
        <begin position="1"/>
        <end position="22"/>
    </location>
</feature>
<feature type="chain" id="PRO_0000367411" description="GDSL esterase/lipase At5g03610">
    <location>
        <begin position="23"/>
        <end position="359"/>
    </location>
</feature>
<feature type="active site" description="Nucleophile" evidence="1">
    <location>
        <position position="50"/>
    </location>
</feature>
<feature type="active site" evidence="1">
    <location>
        <position position="332"/>
    </location>
</feature>
<feature type="active site" evidence="1">
    <location>
        <position position="335"/>
    </location>
</feature>
<feature type="glycosylation site" description="N-linked (GlcNAc...) asparagine" evidence="2">
    <location>
        <position position="136"/>
    </location>
</feature>
<feature type="glycosylation site" description="N-linked (GlcNAc...) asparagine" evidence="2">
    <location>
        <position position="236"/>
    </location>
</feature>
<feature type="glycosylation site" description="N-linked (GlcNAc...) asparagine" evidence="2">
    <location>
        <position position="259"/>
    </location>
</feature>
<protein>
    <recommendedName>
        <fullName>GDSL esterase/lipase At5g03610</fullName>
        <ecNumber>3.1.1.-</ecNumber>
    </recommendedName>
    <alternativeName>
        <fullName>Extracellular lipase At5g03610</fullName>
    </alternativeName>
</protein>
<accession>Q9LZS7</accession>
<keyword id="KW-0325">Glycoprotein</keyword>
<keyword id="KW-0378">Hydrolase</keyword>
<keyword id="KW-0442">Lipid degradation</keyword>
<keyword id="KW-0443">Lipid metabolism</keyword>
<keyword id="KW-1185">Reference proteome</keyword>
<keyword id="KW-0964">Secreted</keyword>
<keyword id="KW-0732">Signal</keyword>
<sequence>MDSLIKLFFCLFIFLCTSLLFGEINGVEGSNQNHHLYPFRPTKLFVFGDSYADTGNIKKAFSSSWKFPYGITFPGKPAGRFSDGRVATDFLAKFVGIKSPIPYFWKDYAGKKRLQYGMNFAYGGTGVFNTQTPLPNMTTQIDIFQNILTTGDIYYPPELTSSVALVSVAGNDYSNFIALNRPASEFPAFIKQVVDQTEVNLRRIHALGVKKIAVPSLQPLGCLPPFTFVTSFQRCNETQNALVNLHNNLLQQVVAKLNNETKQSTFIILDLYNAFLTVFKNKGSNPGSTRFESPLKPCCVGVSREYNCGSVDEKGVKKYIVCDNPKTAFFWDGLHPTEEGWRSVYSVLRESLTASLIKA</sequence>
<evidence type="ECO:0000250" key="1"/>
<evidence type="ECO:0000255" key="2"/>
<evidence type="ECO:0000305" key="3"/>
<gene>
    <name type="ordered locus">At5g03610</name>
    <name type="ORF">F17C15.30</name>
</gene>